<dbReference type="EC" id="6.1.1.11" evidence="1"/>
<dbReference type="EMBL" id="AE014133">
    <property type="protein sequence ID" value="AAN59501.1"/>
    <property type="molecule type" value="Genomic_DNA"/>
</dbReference>
<dbReference type="RefSeq" id="NP_722195.1">
    <property type="nucleotide sequence ID" value="NC_004350.2"/>
</dbReference>
<dbReference type="RefSeq" id="WP_002263348.1">
    <property type="nucleotide sequence ID" value="NC_004350.2"/>
</dbReference>
<dbReference type="SMR" id="Q8DSB7"/>
<dbReference type="STRING" id="210007.SMU_1886"/>
<dbReference type="KEGG" id="smu:SMU_1886"/>
<dbReference type="PATRIC" id="fig|210007.7.peg.1680"/>
<dbReference type="eggNOG" id="COG0172">
    <property type="taxonomic scope" value="Bacteria"/>
</dbReference>
<dbReference type="HOGENOM" id="CLU_023797_1_1_9"/>
<dbReference type="OrthoDB" id="9804647at2"/>
<dbReference type="PhylomeDB" id="Q8DSB7"/>
<dbReference type="UniPathway" id="UPA00906">
    <property type="reaction ID" value="UER00895"/>
</dbReference>
<dbReference type="Proteomes" id="UP000002512">
    <property type="component" value="Chromosome"/>
</dbReference>
<dbReference type="GO" id="GO:0005737">
    <property type="term" value="C:cytoplasm"/>
    <property type="evidence" value="ECO:0007669"/>
    <property type="project" value="UniProtKB-SubCell"/>
</dbReference>
<dbReference type="GO" id="GO:0005524">
    <property type="term" value="F:ATP binding"/>
    <property type="evidence" value="ECO:0007669"/>
    <property type="project" value="UniProtKB-UniRule"/>
</dbReference>
<dbReference type="GO" id="GO:0140096">
    <property type="term" value="F:catalytic activity, acting on a protein"/>
    <property type="evidence" value="ECO:0007669"/>
    <property type="project" value="UniProtKB-ARBA"/>
</dbReference>
<dbReference type="GO" id="GO:0004828">
    <property type="term" value="F:serine-tRNA ligase activity"/>
    <property type="evidence" value="ECO:0007669"/>
    <property type="project" value="UniProtKB-UniRule"/>
</dbReference>
<dbReference type="GO" id="GO:0016740">
    <property type="term" value="F:transferase activity"/>
    <property type="evidence" value="ECO:0007669"/>
    <property type="project" value="UniProtKB-ARBA"/>
</dbReference>
<dbReference type="GO" id="GO:0016260">
    <property type="term" value="P:selenocysteine biosynthetic process"/>
    <property type="evidence" value="ECO:0007669"/>
    <property type="project" value="UniProtKB-UniRule"/>
</dbReference>
<dbReference type="GO" id="GO:0006434">
    <property type="term" value="P:seryl-tRNA aminoacylation"/>
    <property type="evidence" value="ECO:0007669"/>
    <property type="project" value="UniProtKB-UniRule"/>
</dbReference>
<dbReference type="CDD" id="cd00770">
    <property type="entry name" value="SerRS_core"/>
    <property type="match status" value="1"/>
</dbReference>
<dbReference type="Gene3D" id="3.30.930.10">
    <property type="entry name" value="Bira Bifunctional Protein, Domain 2"/>
    <property type="match status" value="1"/>
</dbReference>
<dbReference type="Gene3D" id="1.10.287.40">
    <property type="entry name" value="Serine-tRNA synthetase, tRNA binding domain"/>
    <property type="match status" value="1"/>
</dbReference>
<dbReference type="HAMAP" id="MF_00176">
    <property type="entry name" value="Ser_tRNA_synth_type1"/>
    <property type="match status" value="1"/>
</dbReference>
<dbReference type="InterPro" id="IPR002314">
    <property type="entry name" value="aa-tRNA-synt_IIb"/>
</dbReference>
<dbReference type="InterPro" id="IPR006195">
    <property type="entry name" value="aa-tRNA-synth_II"/>
</dbReference>
<dbReference type="InterPro" id="IPR045864">
    <property type="entry name" value="aa-tRNA-synth_II/BPL/LPL"/>
</dbReference>
<dbReference type="InterPro" id="IPR002317">
    <property type="entry name" value="Ser-tRNA-ligase_type_1"/>
</dbReference>
<dbReference type="InterPro" id="IPR015866">
    <property type="entry name" value="Ser-tRNA-synth_1_N"/>
</dbReference>
<dbReference type="InterPro" id="IPR042103">
    <property type="entry name" value="SerRS_1_N_sf"/>
</dbReference>
<dbReference type="InterPro" id="IPR033729">
    <property type="entry name" value="SerRS_core"/>
</dbReference>
<dbReference type="InterPro" id="IPR010978">
    <property type="entry name" value="tRNA-bd_arm"/>
</dbReference>
<dbReference type="NCBIfam" id="TIGR00414">
    <property type="entry name" value="serS"/>
    <property type="match status" value="1"/>
</dbReference>
<dbReference type="PANTHER" id="PTHR43697:SF1">
    <property type="entry name" value="SERINE--TRNA LIGASE"/>
    <property type="match status" value="1"/>
</dbReference>
<dbReference type="PANTHER" id="PTHR43697">
    <property type="entry name" value="SERYL-TRNA SYNTHETASE"/>
    <property type="match status" value="1"/>
</dbReference>
<dbReference type="Pfam" id="PF02403">
    <property type="entry name" value="Seryl_tRNA_N"/>
    <property type="match status" value="1"/>
</dbReference>
<dbReference type="Pfam" id="PF00587">
    <property type="entry name" value="tRNA-synt_2b"/>
    <property type="match status" value="1"/>
</dbReference>
<dbReference type="PIRSF" id="PIRSF001529">
    <property type="entry name" value="Ser-tRNA-synth_IIa"/>
    <property type="match status" value="1"/>
</dbReference>
<dbReference type="PRINTS" id="PR00981">
    <property type="entry name" value="TRNASYNTHSER"/>
</dbReference>
<dbReference type="SUPFAM" id="SSF55681">
    <property type="entry name" value="Class II aaRS and biotin synthetases"/>
    <property type="match status" value="1"/>
</dbReference>
<dbReference type="SUPFAM" id="SSF46589">
    <property type="entry name" value="tRNA-binding arm"/>
    <property type="match status" value="1"/>
</dbReference>
<dbReference type="PROSITE" id="PS50862">
    <property type="entry name" value="AA_TRNA_LIGASE_II"/>
    <property type="match status" value="1"/>
</dbReference>
<reference key="1">
    <citation type="journal article" date="2002" name="Proc. Natl. Acad. Sci. U.S.A.">
        <title>Genome sequence of Streptococcus mutans UA159, a cariogenic dental pathogen.</title>
        <authorList>
            <person name="Ajdic D.J."/>
            <person name="McShan W.M."/>
            <person name="McLaughlin R.E."/>
            <person name="Savic G."/>
            <person name="Chang J."/>
            <person name="Carson M.B."/>
            <person name="Primeaux C."/>
            <person name="Tian R."/>
            <person name="Kenton S."/>
            <person name="Jia H.G."/>
            <person name="Lin S.P."/>
            <person name="Qian Y."/>
            <person name="Li S."/>
            <person name="Zhu H."/>
            <person name="Najar F.Z."/>
            <person name="Lai H."/>
            <person name="White J."/>
            <person name="Roe B.A."/>
            <person name="Ferretti J.J."/>
        </authorList>
    </citation>
    <scope>NUCLEOTIDE SEQUENCE [LARGE SCALE GENOMIC DNA]</scope>
    <source>
        <strain>ATCC 700610 / UA159</strain>
    </source>
</reference>
<name>SYS_STRMU</name>
<proteinExistence type="inferred from homology"/>
<keyword id="KW-0030">Aminoacyl-tRNA synthetase</keyword>
<keyword id="KW-0067">ATP-binding</keyword>
<keyword id="KW-0963">Cytoplasm</keyword>
<keyword id="KW-0436">Ligase</keyword>
<keyword id="KW-0547">Nucleotide-binding</keyword>
<keyword id="KW-0648">Protein biosynthesis</keyword>
<keyword id="KW-1185">Reference proteome</keyword>
<accession>Q8DSB7</accession>
<comment type="function">
    <text evidence="1">Catalyzes the attachment of serine to tRNA(Ser). Is also able to aminoacylate tRNA(Sec) with serine, to form the misacylated tRNA L-seryl-tRNA(Sec), which will be further converted into selenocysteinyl-tRNA(Sec).</text>
</comment>
<comment type="catalytic activity">
    <reaction evidence="1">
        <text>tRNA(Ser) + L-serine + ATP = L-seryl-tRNA(Ser) + AMP + diphosphate + H(+)</text>
        <dbReference type="Rhea" id="RHEA:12292"/>
        <dbReference type="Rhea" id="RHEA-COMP:9669"/>
        <dbReference type="Rhea" id="RHEA-COMP:9703"/>
        <dbReference type="ChEBI" id="CHEBI:15378"/>
        <dbReference type="ChEBI" id="CHEBI:30616"/>
        <dbReference type="ChEBI" id="CHEBI:33019"/>
        <dbReference type="ChEBI" id="CHEBI:33384"/>
        <dbReference type="ChEBI" id="CHEBI:78442"/>
        <dbReference type="ChEBI" id="CHEBI:78533"/>
        <dbReference type="ChEBI" id="CHEBI:456215"/>
        <dbReference type="EC" id="6.1.1.11"/>
    </reaction>
</comment>
<comment type="catalytic activity">
    <reaction evidence="1">
        <text>tRNA(Sec) + L-serine + ATP = L-seryl-tRNA(Sec) + AMP + diphosphate + H(+)</text>
        <dbReference type="Rhea" id="RHEA:42580"/>
        <dbReference type="Rhea" id="RHEA-COMP:9742"/>
        <dbReference type="Rhea" id="RHEA-COMP:10128"/>
        <dbReference type="ChEBI" id="CHEBI:15378"/>
        <dbReference type="ChEBI" id="CHEBI:30616"/>
        <dbReference type="ChEBI" id="CHEBI:33019"/>
        <dbReference type="ChEBI" id="CHEBI:33384"/>
        <dbReference type="ChEBI" id="CHEBI:78442"/>
        <dbReference type="ChEBI" id="CHEBI:78533"/>
        <dbReference type="ChEBI" id="CHEBI:456215"/>
        <dbReference type="EC" id="6.1.1.11"/>
    </reaction>
</comment>
<comment type="pathway">
    <text evidence="1">Aminoacyl-tRNA biosynthesis; selenocysteinyl-tRNA(Sec) biosynthesis; L-seryl-tRNA(Sec) from L-serine and tRNA(Sec): step 1/1.</text>
</comment>
<comment type="subunit">
    <text evidence="1">Homodimer. The tRNA molecule binds across the dimer.</text>
</comment>
<comment type="subcellular location">
    <subcellularLocation>
        <location evidence="1">Cytoplasm</location>
    </subcellularLocation>
</comment>
<comment type="domain">
    <text evidence="1">Consists of two distinct domains, a catalytic core and a N-terminal extension that is involved in tRNA binding.</text>
</comment>
<comment type="similarity">
    <text evidence="1">Belongs to the class-II aminoacyl-tRNA synthetase family. Type-1 seryl-tRNA synthetase subfamily.</text>
</comment>
<organism>
    <name type="scientific">Streptococcus mutans serotype c (strain ATCC 700610 / UA159)</name>
    <dbReference type="NCBI Taxonomy" id="210007"/>
    <lineage>
        <taxon>Bacteria</taxon>
        <taxon>Bacillati</taxon>
        <taxon>Bacillota</taxon>
        <taxon>Bacilli</taxon>
        <taxon>Lactobacillales</taxon>
        <taxon>Streptococcaceae</taxon>
        <taxon>Streptococcus</taxon>
    </lineage>
</organism>
<sequence length="426" mass="48393">MLDIKRIRNDFDQIAEKLARRGVDEKTLHDLKELDFKRRQLLIKSEEAKAERNTASAAIAQAKRNQEDASEQIADMQKLSAEIKALDAQLVEIDGQLKTFTTTLPNIPADDVPLGADEDENVEMRRWGKPRQFDFDIKAHWDLGEDLDILDWERGSKVTGSRFLFYKGLGARLERAIYNFMLDEHAKEGYTEVIPPYMVNHDSMFGTGQYPKFKEDTFELADNDYVLIPTAEVPLTNYYRGEIIDGKELPIYFTAMSPSFRSEAGSAGRDTRGLIRLHQFHKVEMVKFAKPEDSYNELEKMTANAENILQKLELPYRVITLCTGDMGFSAAKTYDLEVWIPAQNTYREISSCSNTEDFQARRAQIRYRDEVDGKVKLLHTLNGSGLAVGRTVAAILENYQNADGSVTIPEVLRPYIGGVQVISPQS</sequence>
<evidence type="ECO:0000255" key="1">
    <source>
        <dbReference type="HAMAP-Rule" id="MF_00176"/>
    </source>
</evidence>
<protein>
    <recommendedName>
        <fullName evidence="1">Serine--tRNA ligase</fullName>
        <ecNumber evidence="1">6.1.1.11</ecNumber>
    </recommendedName>
    <alternativeName>
        <fullName evidence="1">Seryl-tRNA synthetase</fullName>
        <shortName evidence="1">SerRS</shortName>
    </alternativeName>
    <alternativeName>
        <fullName evidence="1">Seryl-tRNA(Ser/Sec) synthetase</fullName>
    </alternativeName>
</protein>
<gene>
    <name evidence="1" type="primary">serS</name>
    <name type="synonym">sys</name>
    <name type="ordered locus">SMU_1886</name>
</gene>
<feature type="chain" id="PRO_0000122132" description="Serine--tRNA ligase">
    <location>
        <begin position="1"/>
        <end position="426"/>
    </location>
</feature>
<feature type="binding site" evidence="1">
    <location>
        <begin position="230"/>
        <end position="232"/>
    </location>
    <ligand>
        <name>L-serine</name>
        <dbReference type="ChEBI" id="CHEBI:33384"/>
    </ligand>
</feature>
<feature type="binding site" evidence="1">
    <location>
        <begin position="261"/>
        <end position="263"/>
    </location>
    <ligand>
        <name>ATP</name>
        <dbReference type="ChEBI" id="CHEBI:30616"/>
    </ligand>
</feature>
<feature type="binding site" evidence="1">
    <location>
        <position position="284"/>
    </location>
    <ligand>
        <name>L-serine</name>
        <dbReference type="ChEBI" id="CHEBI:33384"/>
    </ligand>
</feature>
<feature type="binding site" evidence="1">
    <location>
        <begin position="348"/>
        <end position="351"/>
    </location>
    <ligand>
        <name>ATP</name>
        <dbReference type="ChEBI" id="CHEBI:30616"/>
    </ligand>
</feature>
<feature type="binding site" evidence="1">
    <location>
        <position position="384"/>
    </location>
    <ligand>
        <name>L-serine</name>
        <dbReference type="ChEBI" id="CHEBI:33384"/>
    </ligand>
</feature>